<dbReference type="EMBL" id="DQ887676">
    <property type="protein sequence ID" value="ABH88308.1"/>
    <property type="molecule type" value="Genomic_DNA"/>
</dbReference>
<dbReference type="RefSeq" id="YP_784397.1">
    <property type="nucleotide sequence ID" value="NC_008456.1"/>
</dbReference>
<dbReference type="SMR" id="Q06GY6"/>
<dbReference type="GeneID" id="4363573"/>
<dbReference type="GO" id="GO:0009535">
    <property type="term" value="C:chloroplast thylakoid membrane"/>
    <property type="evidence" value="ECO:0007669"/>
    <property type="project" value="UniProtKB-SubCell"/>
</dbReference>
<dbReference type="GO" id="GO:0009522">
    <property type="term" value="C:photosystem I"/>
    <property type="evidence" value="ECO:0007669"/>
    <property type="project" value="InterPro"/>
</dbReference>
<dbReference type="GO" id="GO:0015979">
    <property type="term" value="P:photosynthesis"/>
    <property type="evidence" value="ECO:0007669"/>
    <property type="project" value="UniProtKB-UniRule"/>
</dbReference>
<dbReference type="HAMAP" id="MF_00437">
    <property type="entry name" value="Ycf4"/>
    <property type="match status" value="1"/>
</dbReference>
<dbReference type="InterPro" id="IPR003359">
    <property type="entry name" value="PSI_Ycf4_assembly"/>
</dbReference>
<dbReference type="PANTHER" id="PTHR33288">
    <property type="match status" value="1"/>
</dbReference>
<dbReference type="PANTHER" id="PTHR33288:SF4">
    <property type="entry name" value="PHOTOSYSTEM I ASSEMBLY PROTEIN YCF4"/>
    <property type="match status" value="1"/>
</dbReference>
<dbReference type="Pfam" id="PF02392">
    <property type="entry name" value="Ycf4"/>
    <property type="match status" value="1"/>
</dbReference>
<sequence length="184" mass="21439">MNWRSERIWIELITGSRKISNFCWACILFLGSLGFLLVGTSSYLGRNLISLFPSQQIIFFPQGIVMSFYGIAGLFISSYLWCTISWNVGSGYDRFDRKEGVVCIFRWGFPGINRRIFLRFLMRDIQSIRMEVKEGLYSRRVLYMEIRGQGAIPLTRTDENLTPREIEQKAAESAYFLRVPIEVF</sequence>
<comment type="function">
    <text evidence="1">Seems to be required for the assembly of the photosystem I complex.</text>
</comment>
<comment type="subcellular location">
    <subcellularLocation>
        <location evidence="1">Plastid</location>
        <location evidence="1">Chloroplast thylakoid membrane</location>
        <topology evidence="1">Multi-pass membrane protein</topology>
    </subcellularLocation>
</comment>
<comment type="similarity">
    <text evidence="1">Belongs to the Ycf4 family.</text>
</comment>
<geneLocation type="chloroplast"/>
<keyword id="KW-0150">Chloroplast</keyword>
<keyword id="KW-0472">Membrane</keyword>
<keyword id="KW-0602">Photosynthesis</keyword>
<keyword id="KW-0934">Plastid</keyword>
<keyword id="KW-0793">Thylakoid</keyword>
<keyword id="KW-0812">Transmembrane</keyword>
<keyword id="KW-1133">Transmembrane helix</keyword>
<proteinExistence type="inferred from homology"/>
<feature type="chain" id="PRO_0000275653" description="Photosystem I assembly protein Ycf4">
    <location>
        <begin position="1"/>
        <end position="184"/>
    </location>
</feature>
<feature type="transmembrane region" description="Helical" evidence="1">
    <location>
        <begin position="19"/>
        <end position="39"/>
    </location>
</feature>
<feature type="transmembrane region" description="Helical" evidence="1">
    <location>
        <begin position="57"/>
        <end position="77"/>
    </location>
</feature>
<gene>
    <name evidence="1" type="primary">ycf4</name>
</gene>
<accession>Q06GY6</accession>
<protein>
    <recommendedName>
        <fullName evidence="1">Photosystem I assembly protein Ycf4</fullName>
    </recommendedName>
</protein>
<reference key="1">
    <citation type="journal article" date="2006" name="BMC Evol. Biol.">
        <title>Complete plastid genome sequences of Drimys, Liriodendron, and Piper: implications for the phylogenetic relationships of magnoliids.</title>
        <authorList>
            <person name="Cai Z."/>
            <person name="Penaflor C."/>
            <person name="Kuehl J.V."/>
            <person name="Leebens-Mack J."/>
            <person name="Carlson J.E."/>
            <person name="dePamphilis C.W."/>
            <person name="Boore J.L."/>
            <person name="Jansen R.K."/>
        </authorList>
    </citation>
    <scope>NUCLEOTIDE SEQUENCE [LARGE SCALE GENOMIC DNA]</scope>
</reference>
<name>YCF4_DRIGR</name>
<organism>
    <name type="scientific">Drimys granadensis</name>
    <dbReference type="NCBI Taxonomy" id="224735"/>
    <lineage>
        <taxon>Eukaryota</taxon>
        <taxon>Viridiplantae</taxon>
        <taxon>Streptophyta</taxon>
        <taxon>Embryophyta</taxon>
        <taxon>Tracheophyta</taxon>
        <taxon>Spermatophyta</taxon>
        <taxon>Magnoliopsida</taxon>
        <taxon>Magnoliidae</taxon>
        <taxon>Canellales</taxon>
        <taxon>Winteraceae</taxon>
        <taxon>Drimys</taxon>
    </lineage>
</organism>
<evidence type="ECO:0000255" key="1">
    <source>
        <dbReference type="HAMAP-Rule" id="MF_00437"/>
    </source>
</evidence>